<evidence type="ECO:0000305" key="1"/>
<protein>
    <recommendedName>
        <fullName>Altered inheritance of mitochondria protein 32</fullName>
    </recommendedName>
</protein>
<organism>
    <name type="scientific">Eremothecium gossypii (strain ATCC 10895 / CBS 109.51 / FGSC 9923 / NRRL Y-1056)</name>
    <name type="common">Yeast</name>
    <name type="synonym">Ashbya gossypii</name>
    <dbReference type="NCBI Taxonomy" id="284811"/>
    <lineage>
        <taxon>Eukaryota</taxon>
        <taxon>Fungi</taxon>
        <taxon>Dikarya</taxon>
        <taxon>Ascomycota</taxon>
        <taxon>Saccharomycotina</taxon>
        <taxon>Saccharomycetes</taxon>
        <taxon>Saccharomycetales</taxon>
        <taxon>Saccharomycetaceae</taxon>
        <taxon>Eremothecium</taxon>
    </lineage>
</organism>
<sequence>MGVAKYTKWGLQLRRAFHGGFKLVDIEAREPVKCACESEVASYNGALPPDCRLDTSIPLPSKPPAYSKHVLLVSPRADAWVADWQSKLELNPHWPYNAVSTFKRALRTAYRGDGILVNAVCFQGSTLLPKLRHGHAQFLVLPEFQVYDVYQDSIEEFAYFIGGGKGKEAPSRLGFLDYAEGSGNQAARREQGPGCAAAGPIFQGQPFNRNLLLVCGHLQRDARCGLIAPELVDALKGEPYLAETEIGIVSHIGGHKLAGNLIYYSRADPSHVDKPLVDALWFGKVLPAMIPTLVDALSQKKIVSANYRGGISF</sequence>
<accession>Q753D3</accession>
<proteinExistence type="inferred from homology"/>
<reference key="1">
    <citation type="journal article" date="2004" name="Science">
        <title>The Ashbya gossypii genome as a tool for mapping the ancient Saccharomyces cerevisiae genome.</title>
        <authorList>
            <person name="Dietrich F.S."/>
            <person name="Voegeli S."/>
            <person name="Brachat S."/>
            <person name="Lerch A."/>
            <person name="Gates K."/>
            <person name="Steiner S."/>
            <person name="Mohr C."/>
            <person name="Poehlmann R."/>
            <person name="Luedi P."/>
            <person name="Choi S."/>
            <person name="Wing R.A."/>
            <person name="Flavier A."/>
            <person name="Gaffney T.D."/>
            <person name="Philippsen P."/>
        </authorList>
    </citation>
    <scope>NUCLEOTIDE SEQUENCE [LARGE SCALE GENOMIC DNA]</scope>
    <source>
        <strain>ATCC 10895 / CBS 109.51 / FGSC 9923 / NRRL Y-1056</strain>
    </source>
</reference>
<reference key="2">
    <citation type="journal article" date="2013" name="G3 (Bethesda)">
        <title>Genomes of Ashbya fungi isolated from insects reveal four mating-type loci, numerous translocations, lack of transposons, and distinct gene duplications.</title>
        <authorList>
            <person name="Dietrich F.S."/>
            <person name="Voegeli S."/>
            <person name="Kuo S."/>
            <person name="Philippsen P."/>
        </authorList>
    </citation>
    <scope>GENOME REANNOTATION</scope>
    <source>
        <strain>ATCC 10895 / CBS 109.51 / FGSC 9923 / NRRL Y-1056</strain>
    </source>
</reference>
<dbReference type="EMBL" id="AE016819">
    <property type="protein sequence ID" value="AAS53754.1"/>
    <property type="molecule type" value="Genomic_DNA"/>
</dbReference>
<dbReference type="RefSeq" id="NP_985930.1">
    <property type="nucleotide sequence ID" value="NM_211285.1"/>
</dbReference>
<dbReference type="FunCoup" id="Q753D3">
    <property type="interactions" value="25"/>
</dbReference>
<dbReference type="STRING" id="284811.Q753D3"/>
<dbReference type="EnsemblFungi" id="AAS53754">
    <property type="protein sequence ID" value="AAS53754"/>
    <property type="gene ID" value="AGOS_AFR383C"/>
</dbReference>
<dbReference type="GeneID" id="4622201"/>
<dbReference type="KEGG" id="ago:AGOS_AFR383C"/>
<dbReference type="eggNOG" id="ENOG502QS3W">
    <property type="taxonomic scope" value="Eukaryota"/>
</dbReference>
<dbReference type="HOGENOM" id="CLU_044499_1_0_1"/>
<dbReference type="InParanoid" id="Q753D3"/>
<dbReference type="OMA" id="IPEMKIY"/>
<dbReference type="OrthoDB" id="10253744at2759"/>
<dbReference type="Proteomes" id="UP000000591">
    <property type="component" value="Chromosome VI"/>
</dbReference>
<dbReference type="GO" id="GO:0005758">
    <property type="term" value="C:mitochondrial intermembrane space"/>
    <property type="evidence" value="ECO:0007669"/>
    <property type="project" value="EnsemblFungi"/>
</dbReference>
<dbReference type="GO" id="GO:0005759">
    <property type="term" value="C:mitochondrial matrix"/>
    <property type="evidence" value="ECO:0007669"/>
    <property type="project" value="EnsemblFungi"/>
</dbReference>
<dbReference type="GO" id="GO:0045454">
    <property type="term" value="P:cell redox homeostasis"/>
    <property type="evidence" value="ECO:0007669"/>
    <property type="project" value="EnsemblFungi"/>
</dbReference>
<dbReference type="GO" id="GO:0065003">
    <property type="term" value="P:protein-containing complex assembly"/>
    <property type="evidence" value="ECO:0007669"/>
    <property type="project" value="EnsemblFungi"/>
</dbReference>
<dbReference type="CDD" id="cd03062">
    <property type="entry name" value="TRX_Fd_Sucrase"/>
    <property type="match status" value="1"/>
</dbReference>
<dbReference type="InterPro" id="IPR009737">
    <property type="entry name" value="Aim32/Apd1-like"/>
</dbReference>
<dbReference type="InterPro" id="IPR036249">
    <property type="entry name" value="Thioredoxin-like_sf"/>
</dbReference>
<dbReference type="PANTHER" id="PTHR31902">
    <property type="entry name" value="ACTIN PATCHES DISTAL PROTEIN 1"/>
    <property type="match status" value="1"/>
</dbReference>
<dbReference type="PANTHER" id="PTHR31902:SF7">
    <property type="entry name" value="ALTERED INHERITANCE OF MITOCHONDRIA PROTEIN 32"/>
    <property type="match status" value="1"/>
</dbReference>
<dbReference type="Pfam" id="PF06999">
    <property type="entry name" value="Suc_Fer-like"/>
    <property type="match status" value="1"/>
</dbReference>
<dbReference type="SUPFAM" id="SSF52833">
    <property type="entry name" value="Thioredoxin-like"/>
    <property type="match status" value="1"/>
</dbReference>
<comment type="similarity">
    <text evidence="1">Belongs to the AIM32 family.</text>
</comment>
<gene>
    <name type="primary">AIM32</name>
    <name type="ordered locus">AFR383C</name>
    <name type="ORF">AGOS_AFR383C</name>
</gene>
<keyword id="KW-1185">Reference proteome</keyword>
<feature type="chain" id="PRO_0000399693" description="Altered inheritance of mitochondria protein 32">
    <location>
        <begin position="1"/>
        <end position="313"/>
    </location>
</feature>
<name>AIM32_EREGS</name>